<evidence type="ECO:0000255" key="1">
    <source>
        <dbReference type="HAMAP-Rule" id="MF_00004"/>
    </source>
</evidence>
<gene>
    <name evidence="1" type="primary">apt</name>
    <name type="ordered locus">Ping_2278</name>
</gene>
<feature type="chain" id="PRO_0000329368" description="Adenine phosphoribosyltransferase">
    <location>
        <begin position="1"/>
        <end position="181"/>
    </location>
</feature>
<name>APT_PSYIN</name>
<reference key="1">
    <citation type="journal article" date="2008" name="BMC Genomics">
        <title>Genomics of an extreme psychrophile, Psychromonas ingrahamii.</title>
        <authorList>
            <person name="Riley M."/>
            <person name="Staley J.T."/>
            <person name="Danchin A."/>
            <person name="Wang T.Z."/>
            <person name="Brettin T.S."/>
            <person name="Hauser L.J."/>
            <person name="Land M.L."/>
            <person name="Thompson L.S."/>
        </authorList>
    </citation>
    <scope>NUCLEOTIDE SEQUENCE [LARGE SCALE GENOMIC DNA]</scope>
    <source>
        <strain>DSM 17664 / CCUG 51855 / 37</strain>
    </source>
</reference>
<proteinExistence type="inferred from homology"/>
<sequence>MTAPTLEEIKNCIKSIPDYPIPGIMFRDITSLIENGAAFSATINLLVERYKDQNISKVVGTEARGFIFGAPLAAAIGAGFVPVRKPGKLPRTTVHENYELEYGTDSLHIHSDAIKKNERVLLVDDLLATGGTAEASIKLIHRSGGIVIESAFVIELPALKGAQKLHALNVPYFSLIKFEGE</sequence>
<protein>
    <recommendedName>
        <fullName evidence="1">Adenine phosphoribosyltransferase</fullName>
        <shortName evidence="1">APRT</shortName>
        <ecNumber evidence="1">2.4.2.7</ecNumber>
    </recommendedName>
</protein>
<organism>
    <name type="scientific">Psychromonas ingrahamii (strain DSM 17664 / CCUG 51855 / 37)</name>
    <dbReference type="NCBI Taxonomy" id="357804"/>
    <lineage>
        <taxon>Bacteria</taxon>
        <taxon>Pseudomonadati</taxon>
        <taxon>Pseudomonadota</taxon>
        <taxon>Gammaproteobacteria</taxon>
        <taxon>Alteromonadales</taxon>
        <taxon>Psychromonadaceae</taxon>
        <taxon>Psychromonas</taxon>
    </lineage>
</organism>
<dbReference type="EC" id="2.4.2.7" evidence="1"/>
<dbReference type="EMBL" id="CP000510">
    <property type="protein sequence ID" value="ABM04019.1"/>
    <property type="molecule type" value="Genomic_DNA"/>
</dbReference>
<dbReference type="RefSeq" id="WP_011770579.1">
    <property type="nucleotide sequence ID" value="NC_008709.1"/>
</dbReference>
<dbReference type="SMR" id="A1SX04"/>
<dbReference type="STRING" id="357804.Ping_2278"/>
<dbReference type="KEGG" id="pin:Ping_2278"/>
<dbReference type="eggNOG" id="COG0503">
    <property type="taxonomic scope" value="Bacteria"/>
</dbReference>
<dbReference type="HOGENOM" id="CLU_063339_3_0_6"/>
<dbReference type="OrthoDB" id="9803963at2"/>
<dbReference type="UniPathway" id="UPA00588">
    <property type="reaction ID" value="UER00646"/>
</dbReference>
<dbReference type="Proteomes" id="UP000000639">
    <property type="component" value="Chromosome"/>
</dbReference>
<dbReference type="GO" id="GO:0005829">
    <property type="term" value="C:cytosol"/>
    <property type="evidence" value="ECO:0007669"/>
    <property type="project" value="TreeGrafter"/>
</dbReference>
<dbReference type="GO" id="GO:0003999">
    <property type="term" value="F:adenine phosphoribosyltransferase activity"/>
    <property type="evidence" value="ECO:0007669"/>
    <property type="project" value="UniProtKB-UniRule"/>
</dbReference>
<dbReference type="GO" id="GO:0006168">
    <property type="term" value="P:adenine salvage"/>
    <property type="evidence" value="ECO:0007669"/>
    <property type="project" value="InterPro"/>
</dbReference>
<dbReference type="GO" id="GO:0044209">
    <property type="term" value="P:AMP salvage"/>
    <property type="evidence" value="ECO:0007669"/>
    <property type="project" value="UniProtKB-UniRule"/>
</dbReference>
<dbReference type="GO" id="GO:0006166">
    <property type="term" value="P:purine ribonucleoside salvage"/>
    <property type="evidence" value="ECO:0007669"/>
    <property type="project" value="UniProtKB-KW"/>
</dbReference>
<dbReference type="CDD" id="cd06223">
    <property type="entry name" value="PRTases_typeI"/>
    <property type="match status" value="1"/>
</dbReference>
<dbReference type="FunFam" id="3.40.50.2020:FF:000004">
    <property type="entry name" value="Adenine phosphoribosyltransferase"/>
    <property type="match status" value="1"/>
</dbReference>
<dbReference type="Gene3D" id="3.40.50.2020">
    <property type="match status" value="1"/>
</dbReference>
<dbReference type="HAMAP" id="MF_00004">
    <property type="entry name" value="Aden_phosphoribosyltr"/>
    <property type="match status" value="1"/>
</dbReference>
<dbReference type="InterPro" id="IPR005764">
    <property type="entry name" value="Ade_phspho_trans"/>
</dbReference>
<dbReference type="InterPro" id="IPR050120">
    <property type="entry name" value="Adenine_PRTase"/>
</dbReference>
<dbReference type="InterPro" id="IPR000836">
    <property type="entry name" value="PRibTrfase_dom"/>
</dbReference>
<dbReference type="InterPro" id="IPR029057">
    <property type="entry name" value="PRTase-like"/>
</dbReference>
<dbReference type="NCBIfam" id="TIGR01090">
    <property type="entry name" value="apt"/>
    <property type="match status" value="1"/>
</dbReference>
<dbReference type="NCBIfam" id="NF002632">
    <property type="entry name" value="PRK02304.1-1"/>
    <property type="match status" value="1"/>
</dbReference>
<dbReference type="NCBIfam" id="NF002634">
    <property type="entry name" value="PRK02304.1-3"/>
    <property type="match status" value="1"/>
</dbReference>
<dbReference type="NCBIfam" id="NF002636">
    <property type="entry name" value="PRK02304.1-5"/>
    <property type="match status" value="1"/>
</dbReference>
<dbReference type="PANTHER" id="PTHR11776">
    <property type="entry name" value="ADENINE PHOSPHORIBOSYLTRANSFERASE"/>
    <property type="match status" value="1"/>
</dbReference>
<dbReference type="PANTHER" id="PTHR11776:SF7">
    <property type="entry name" value="PHOSPHORIBOSYLTRANSFERASE DOMAIN-CONTAINING PROTEIN"/>
    <property type="match status" value="1"/>
</dbReference>
<dbReference type="Pfam" id="PF00156">
    <property type="entry name" value="Pribosyltran"/>
    <property type="match status" value="1"/>
</dbReference>
<dbReference type="SUPFAM" id="SSF53271">
    <property type="entry name" value="PRTase-like"/>
    <property type="match status" value="1"/>
</dbReference>
<dbReference type="PROSITE" id="PS00103">
    <property type="entry name" value="PUR_PYR_PR_TRANSFER"/>
    <property type="match status" value="1"/>
</dbReference>
<keyword id="KW-0963">Cytoplasm</keyword>
<keyword id="KW-0328">Glycosyltransferase</keyword>
<keyword id="KW-0660">Purine salvage</keyword>
<keyword id="KW-1185">Reference proteome</keyword>
<keyword id="KW-0808">Transferase</keyword>
<accession>A1SX04</accession>
<comment type="function">
    <text evidence="1">Catalyzes a salvage reaction resulting in the formation of AMP, that is energically less costly than de novo synthesis.</text>
</comment>
<comment type="catalytic activity">
    <reaction evidence="1">
        <text>AMP + diphosphate = 5-phospho-alpha-D-ribose 1-diphosphate + adenine</text>
        <dbReference type="Rhea" id="RHEA:16609"/>
        <dbReference type="ChEBI" id="CHEBI:16708"/>
        <dbReference type="ChEBI" id="CHEBI:33019"/>
        <dbReference type="ChEBI" id="CHEBI:58017"/>
        <dbReference type="ChEBI" id="CHEBI:456215"/>
        <dbReference type="EC" id="2.4.2.7"/>
    </reaction>
</comment>
<comment type="pathway">
    <text evidence="1">Purine metabolism; AMP biosynthesis via salvage pathway; AMP from adenine: step 1/1.</text>
</comment>
<comment type="subunit">
    <text evidence="1">Homodimer.</text>
</comment>
<comment type="subcellular location">
    <subcellularLocation>
        <location evidence="1">Cytoplasm</location>
    </subcellularLocation>
</comment>
<comment type="similarity">
    <text evidence="1">Belongs to the purine/pyrimidine phosphoribosyltransferase family.</text>
</comment>